<reference key="1">
    <citation type="submission" date="2007-06" db="EMBL/GenBank/DDBJ databases">
        <authorList>
            <person name="Dodson R.J."/>
            <person name="Harkins D."/>
            <person name="Paulsen I.T."/>
        </authorList>
    </citation>
    <scope>NUCLEOTIDE SEQUENCE [LARGE SCALE GENOMIC DNA]</scope>
    <source>
        <strain>DSM 24068 / PA7</strain>
    </source>
</reference>
<sequence length="344" mass="36668">MTLPRPTSPHIRGPLRTPAIMRLVLGACVPGLFTLTWLYGAGTLLNLAWAGLVALACEAAMLALRKRPPGMFLKDGSALVTALLLAVALPPCAPWLLTLVATGFALIFGKHLYGGLGQNPFNPAMLGYVVALVSFPLEMTRWPSPGSAPGLADSLHAFLGLAVQPDAWAHATALDVLKTDRSLTVDELFAADPAFGHLGGAGGEWVNLAFLLGGLFLLWRRLFTWHAPLGMLAGLFAMSLLFWNGSGSDSHGSPLFHLFSGATMLGAFFIVTDPVSGATSNRGRLLFGLGVGVLTYLIRAWGGYPDGVAFAVLLMNLAAPTIDYYTRPRTYGHRKAERGFRRGD</sequence>
<gene>
    <name evidence="1" type="primary">rnfD</name>
    <name type="ordered locus">PSPA7_1637</name>
</gene>
<keyword id="KW-0997">Cell inner membrane</keyword>
<keyword id="KW-1003">Cell membrane</keyword>
<keyword id="KW-0249">Electron transport</keyword>
<keyword id="KW-0285">Flavoprotein</keyword>
<keyword id="KW-0288">FMN</keyword>
<keyword id="KW-0472">Membrane</keyword>
<keyword id="KW-0597">Phosphoprotein</keyword>
<keyword id="KW-1278">Translocase</keyword>
<keyword id="KW-0812">Transmembrane</keyword>
<keyword id="KW-1133">Transmembrane helix</keyword>
<keyword id="KW-0813">Transport</keyword>
<feature type="chain" id="PRO_1000060344" description="Ion-translocating oxidoreductase complex subunit D">
    <location>
        <begin position="1"/>
        <end position="344"/>
    </location>
</feature>
<feature type="transmembrane region" description="Helical" evidence="1">
    <location>
        <begin position="23"/>
        <end position="43"/>
    </location>
</feature>
<feature type="transmembrane region" description="Helical" evidence="1">
    <location>
        <begin position="44"/>
        <end position="64"/>
    </location>
</feature>
<feature type="transmembrane region" description="Helical" evidence="1">
    <location>
        <begin position="80"/>
        <end position="100"/>
    </location>
</feature>
<feature type="transmembrane region" description="Helical" evidence="1">
    <location>
        <begin position="120"/>
        <end position="140"/>
    </location>
</feature>
<feature type="transmembrane region" description="Helical" evidence="1">
    <location>
        <begin position="198"/>
        <end position="218"/>
    </location>
</feature>
<feature type="transmembrane region" description="Helical" evidence="1">
    <location>
        <begin position="222"/>
        <end position="242"/>
    </location>
</feature>
<feature type="transmembrane region" description="Helical" evidence="1">
    <location>
        <begin position="252"/>
        <end position="272"/>
    </location>
</feature>
<feature type="transmembrane region" description="Helical" evidence="1">
    <location>
        <begin position="285"/>
        <end position="305"/>
    </location>
</feature>
<feature type="transmembrane region" description="Helical" evidence="1">
    <location>
        <begin position="306"/>
        <end position="326"/>
    </location>
</feature>
<feature type="modified residue" description="FMN phosphoryl threonine" evidence="1">
    <location>
        <position position="172"/>
    </location>
</feature>
<comment type="function">
    <text evidence="1">Part of a membrane-bound complex that couples electron transfer with translocation of ions across the membrane.</text>
</comment>
<comment type="cofactor">
    <cofactor evidence="1">
        <name>FMN</name>
        <dbReference type="ChEBI" id="CHEBI:58210"/>
    </cofactor>
</comment>
<comment type="subunit">
    <text evidence="1">The complex is composed of six subunits: RnfA, RnfB, RnfC, RnfD, RnfE and RnfG.</text>
</comment>
<comment type="subcellular location">
    <subcellularLocation>
        <location evidence="1">Cell inner membrane</location>
        <topology evidence="1">Multi-pass membrane protein</topology>
    </subcellularLocation>
</comment>
<comment type="similarity">
    <text evidence="1">Belongs to the NqrB/RnfD family.</text>
</comment>
<accession>A6V1T6</accession>
<proteinExistence type="inferred from homology"/>
<name>RNFD_PSEP7</name>
<dbReference type="EC" id="7.-.-.-" evidence="1"/>
<dbReference type="EMBL" id="CP000744">
    <property type="protein sequence ID" value="ABR83273.1"/>
    <property type="molecule type" value="Genomic_DNA"/>
</dbReference>
<dbReference type="RefSeq" id="WP_012074795.1">
    <property type="nucleotide sequence ID" value="NC_009656.1"/>
</dbReference>
<dbReference type="SMR" id="A6V1T6"/>
<dbReference type="KEGG" id="pap:PSPA7_1637"/>
<dbReference type="HOGENOM" id="CLU_042020_0_0_6"/>
<dbReference type="Proteomes" id="UP000001582">
    <property type="component" value="Chromosome"/>
</dbReference>
<dbReference type="GO" id="GO:0005886">
    <property type="term" value="C:plasma membrane"/>
    <property type="evidence" value="ECO:0007669"/>
    <property type="project" value="UniProtKB-SubCell"/>
</dbReference>
<dbReference type="GO" id="GO:0022900">
    <property type="term" value="P:electron transport chain"/>
    <property type="evidence" value="ECO:0007669"/>
    <property type="project" value="UniProtKB-UniRule"/>
</dbReference>
<dbReference type="GO" id="GO:0055085">
    <property type="term" value="P:transmembrane transport"/>
    <property type="evidence" value="ECO:0007669"/>
    <property type="project" value="InterPro"/>
</dbReference>
<dbReference type="HAMAP" id="MF_00462">
    <property type="entry name" value="RsxD_RnfD"/>
    <property type="match status" value="1"/>
</dbReference>
<dbReference type="InterPro" id="IPR004338">
    <property type="entry name" value="NqrB/RnfD"/>
</dbReference>
<dbReference type="InterPro" id="IPR011303">
    <property type="entry name" value="RnfD_bac"/>
</dbReference>
<dbReference type="NCBIfam" id="TIGR01946">
    <property type="entry name" value="rnfD"/>
    <property type="match status" value="1"/>
</dbReference>
<dbReference type="PANTHER" id="PTHR30578">
    <property type="entry name" value="ELECTRON TRANSPORT COMPLEX PROTEIN RNFD"/>
    <property type="match status" value="1"/>
</dbReference>
<dbReference type="PANTHER" id="PTHR30578:SF0">
    <property type="entry name" value="ION-TRANSLOCATING OXIDOREDUCTASE COMPLEX SUBUNIT D"/>
    <property type="match status" value="1"/>
</dbReference>
<dbReference type="Pfam" id="PF03116">
    <property type="entry name" value="NQR2_RnfD_RnfE"/>
    <property type="match status" value="1"/>
</dbReference>
<organism>
    <name type="scientific">Pseudomonas paraeruginosa (strain DSM 24068 / PA7)</name>
    <name type="common">Pseudomonas aeruginosa (strain PA7)</name>
    <dbReference type="NCBI Taxonomy" id="381754"/>
    <lineage>
        <taxon>Bacteria</taxon>
        <taxon>Pseudomonadati</taxon>
        <taxon>Pseudomonadota</taxon>
        <taxon>Gammaproteobacteria</taxon>
        <taxon>Pseudomonadales</taxon>
        <taxon>Pseudomonadaceae</taxon>
        <taxon>Pseudomonas</taxon>
        <taxon>Pseudomonas paraeruginosa</taxon>
    </lineage>
</organism>
<protein>
    <recommendedName>
        <fullName evidence="1">Ion-translocating oxidoreductase complex subunit D</fullName>
        <ecNumber evidence="1">7.-.-.-</ecNumber>
    </recommendedName>
    <alternativeName>
        <fullName evidence="1">Rnf electron transport complex subunit D</fullName>
    </alternativeName>
</protein>
<evidence type="ECO:0000255" key="1">
    <source>
        <dbReference type="HAMAP-Rule" id="MF_00462"/>
    </source>
</evidence>